<proteinExistence type="inferred from homology"/>
<keyword id="KW-1185">Reference proteome</keyword>
<keyword id="KW-0687">Ribonucleoprotein</keyword>
<keyword id="KW-0689">Ribosomal protein</keyword>
<keyword id="KW-0694">RNA-binding</keyword>
<keyword id="KW-0699">rRNA-binding</keyword>
<keyword id="KW-0820">tRNA-binding</keyword>
<feature type="chain" id="PRO_0000132145" description="Small ribosomal subunit protein uS13">
    <location>
        <begin position="1"/>
        <end position="121"/>
    </location>
</feature>
<feature type="region of interest" description="Disordered" evidence="2">
    <location>
        <begin position="96"/>
        <end position="121"/>
    </location>
</feature>
<feature type="compositionally biased region" description="Basic residues" evidence="2">
    <location>
        <begin position="106"/>
        <end position="121"/>
    </location>
</feature>
<protein>
    <recommendedName>
        <fullName evidence="1">Small ribosomal subunit protein uS13</fullName>
    </recommendedName>
    <alternativeName>
        <fullName evidence="3">30S ribosomal protein S13</fullName>
    </alternativeName>
</protein>
<evidence type="ECO:0000255" key="1">
    <source>
        <dbReference type="HAMAP-Rule" id="MF_01315"/>
    </source>
</evidence>
<evidence type="ECO:0000256" key="2">
    <source>
        <dbReference type="SAM" id="MobiDB-lite"/>
    </source>
</evidence>
<evidence type="ECO:0000305" key="3"/>
<comment type="function">
    <text evidence="1">Located at the top of the head of the 30S subunit, it contacts several helices of the 16S rRNA. In the 70S ribosome it contacts the 23S rRNA (bridge B1a) and protein L5 of the 50S subunit (bridge B1b), connecting the 2 subunits; these bridges are implicated in subunit movement. Contacts the tRNAs in the A and P-sites.</text>
</comment>
<comment type="subunit">
    <text evidence="1">Part of the 30S ribosomal subunit. Forms a loose heterodimer with protein S19. Forms two bridges to the 50S subunit in the 70S ribosome.</text>
</comment>
<comment type="similarity">
    <text evidence="1">Belongs to the universal ribosomal protein uS13 family.</text>
</comment>
<name>RS13_STRA5</name>
<reference key="1">
    <citation type="journal article" date="2002" name="Proc. Natl. Acad. Sci. U.S.A.">
        <title>Complete genome sequence and comparative genomic analysis of an emerging human pathogen, serotype V Streptococcus agalactiae.</title>
        <authorList>
            <person name="Tettelin H."/>
            <person name="Masignani V."/>
            <person name="Cieslewicz M.J."/>
            <person name="Eisen J.A."/>
            <person name="Peterson S.N."/>
            <person name="Wessels M.R."/>
            <person name="Paulsen I.T."/>
            <person name="Nelson K.E."/>
            <person name="Margarit I."/>
            <person name="Read T.D."/>
            <person name="Madoff L.C."/>
            <person name="Wolf A.M."/>
            <person name="Beanan M.J."/>
            <person name="Brinkac L.M."/>
            <person name="Daugherty S.C."/>
            <person name="DeBoy R.T."/>
            <person name="Durkin A.S."/>
            <person name="Kolonay J.F."/>
            <person name="Madupu R."/>
            <person name="Lewis M.R."/>
            <person name="Radune D."/>
            <person name="Fedorova N.B."/>
            <person name="Scanlan D."/>
            <person name="Khouri H.M."/>
            <person name="Mulligan S."/>
            <person name="Carty H.A."/>
            <person name="Cline R.T."/>
            <person name="Van Aken S.E."/>
            <person name="Gill J."/>
            <person name="Scarselli M."/>
            <person name="Mora M."/>
            <person name="Iacobini E.T."/>
            <person name="Brettoni C."/>
            <person name="Galli G."/>
            <person name="Mariani M."/>
            <person name="Vegni F."/>
            <person name="Maione D."/>
            <person name="Rinaudo D."/>
            <person name="Rappuoli R."/>
            <person name="Telford J.L."/>
            <person name="Kasper D.L."/>
            <person name="Grandi G."/>
            <person name="Fraser C.M."/>
        </authorList>
    </citation>
    <scope>NUCLEOTIDE SEQUENCE [LARGE SCALE GENOMIC DNA]</scope>
    <source>
        <strain>ATCC BAA-611 / 2603 V/R</strain>
    </source>
</reference>
<accession>P66391</accession>
<accession>Q8E2B2</accession>
<accession>Q8E7R9</accession>
<organism>
    <name type="scientific">Streptococcus agalactiae serotype V (strain ATCC BAA-611 / 2603 V/R)</name>
    <dbReference type="NCBI Taxonomy" id="208435"/>
    <lineage>
        <taxon>Bacteria</taxon>
        <taxon>Bacillati</taxon>
        <taxon>Bacillota</taxon>
        <taxon>Bacilli</taxon>
        <taxon>Lactobacillales</taxon>
        <taxon>Streptococcaceae</taxon>
        <taxon>Streptococcus</taxon>
    </lineage>
</organism>
<sequence>MARIAGVDIPNDKRVVISLTYVYGIGLSTSKKILAAAGISEDIRVKDLTPDQEDAIRREVDAIKVEGDLRREVNLNIKRLMEIGSYRGIRHRRGLPVRGQNTKNNARTRKGKAVAIAGKKK</sequence>
<gene>
    <name evidence="1" type="primary">rpsM</name>
    <name type="ordered locus">SAG0082</name>
</gene>
<dbReference type="EMBL" id="AE009948">
    <property type="protein sequence ID" value="AAM98990.1"/>
    <property type="molecule type" value="Genomic_DNA"/>
</dbReference>
<dbReference type="RefSeq" id="NP_687118.1">
    <property type="nucleotide sequence ID" value="NC_004116.1"/>
</dbReference>
<dbReference type="RefSeq" id="WP_000090785.1">
    <property type="nucleotide sequence ID" value="NC_004116.1"/>
</dbReference>
<dbReference type="SMR" id="P66391"/>
<dbReference type="STRING" id="208435.SAG0082"/>
<dbReference type="GeneID" id="66885042"/>
<dbReference type="KEGG" id="sag:SAG0082"/>
<dbReference type="PATRIC" id="fig|208435.3.peg.81"/>
<dbReference type="HOGENOM" id="CLU_103849_1_1_9"/>
<dbReference type="OrthoDB" id="9803610at2"/>
<dbReference type="Proteomes" id="UP000000821">
    <property type="component" value="Chromosome"/>
</dbReference>
<dbReference type="GO" id="GO:0005829">
    <property type="term" value="C:cytosol"/>
    <property type="evidence" value="ECO:0007669"/>
    <property type="project" value="TreeGrafter"/>
</dbReference>
<dbReference type="GO" id="GO:0015935">
    <property type="term" value="C:small ribosomal subunit"/>
    <property type="evidence" value="ECO:0007669"/>
    <property type="project" value="TreeGrafter"/>
</dbReference>
<dbReference type="GO" id="GO:0019843">
    <property type="term" value="F:rRNA binding"/>
    <property type="evidence" value="ECO:0007669"/>
    <property type="project" value="UniProtKB-UniRule"/>
</dbReference>
<dbReference type="GO" id="GO:0003735">
    <property type="term" value="F:structural constituent of ribosome"/>
    <property type="evidence" value="ECO:0007669"/>
    <property type="project" value="InterPro"/>
</dbReference>
<dbReference type="GO" id="GO:0000049">
    <property type="term" value="F:tRNA binding"/>
    <property type="evidence" value="ECO:0007669"/>
    <property type="project" value="UniProtKB-UniRule"/>
</dbReference>
<dbReference type="GO" id="GO:0006412">
    <property type="term" value="P:translation"/>
    <property type="evidence" value="ECO:0007669"/>
    <property type="project" value="UniProtKB-UniRule"/>
</dbReference>
<dbReference type="FunFam" id="1.10.8.50:FF:000001">
    <property type="entry name" value="30S ribosomal protein S13"/>
    <property type="match status" value="1"/>
</dbReference>
<dbReference type="FunFam" id="4.10.910.10:FF:000001">
    <property type="entry name" value="30S ribosomal protein S13"/>
    <property type="match status" value="1"/>
</dbReference>
<dbReference type="Gene3D" id="1.10.8.50">
    <property type="match status" value="1"/>
</dbReference>
<dbReference type="Gene3D" id="4.10.910.10">
    <property type="entry name" value="30s ribosomal protein s13, domain 2"/>
    <property type="match status" value="1"/>
</dbReference>
<dbReference type="HAMAP" id="MF_01315">
    <property type="entry name" value="Ribosomal_uS13"/>
    <property type="match status" value="1"/>
</dbReference>
<dbReference type="InterPro" id="IPR027437">
    <property type="entry name" value="Rbsml_uS13_C"/>
</dbReference>
<dbReference type="InterPro" id="IPR001892">
    <property type="entry name" value="Ribosomal_uS13"/>
</dbReference>
<dbReference type="InterPro" id="IPR010979">
    <property type="entry name" value="Ribosomal_uS13-like_H2TH"/>
</dbReference>
<dbReference type="InterPro" id="IPR019980">
    <property type="entry name" value="Ribosomal_uS13_bac-type"/>
</dbReference>
<dbReference type="InterPro" id="IPR018269">
    <property type="entry name" value="Ribosomal_uS13_CS"/>
</dbReference>
<dbReference type="NCBIfam" id="TIGR03631">
    <property type="entry name" value="uS13_bact"/>
    <property type="match status" value="1"/>
</dbReference>
<dbReference type="PANTHER" id="PTHR10871">
    <property type="entry name" value="30S RIBOSOMAL PROTEIN S13/40S RIBOSOMAL PROTEIN S18"/>
    <property type="match status" value="1"/>
</dbReference>
<dbReference type="PANTHER" id="PTHR10871:SF1">
    <property type="entry name" value="SMALL RIBOSOMAL SUBUNIT PROTEIN US13M"/>
    <property type="match status" value="1"/>
</dbReference>
<dbReference type="Pfam" id="PF00416">
    <property type="entry name" value="Ribosomal_S13"/>
    <property type="match status" value="1"/>
</dbReference>
<dbReference type="PIRSF" id="PIRSF002134">
    <property type="entry name" value="Ribosomal_S13"/>
    <property type="match status" value="1"/>
</dbReference>
<dbReference type="SUPFAM" id="SSF46946">
    <property type="entry name" value="S13-like H2TH domain"/>
    <property type="match status" value="1"/>
</dbReference>
<dbReference type="PROSITE" id="PS00646">
    <property type="entry name" value="RIBOSOMAL_S13_1"/>
    <property type="match status" value="1"/>
</dbReference>
<dbReference type="PROSITE" id="PS50159">
    <property type="entry name" value="RIBOSOMAL_S13_2"/>
    <property type="match status" value="1"/>
</dbReference>